<protein>
    <recommendedName>
        <fullName>Leukemia-associated protein 7 homolog</fullName>
    </recommendedName>
    <alternativeName>
        <fullName>Deleted in lymphocytic leukemia 7 homolog</fullName>
    </alternativeName>
</protein>
<evidence type="ECO:0000256" key="1">
    <source>
        <dbReference type="SAM" id="MobiDB-lite"/>
    </source>
</evidence>
<organism>
    <name type="scientific">Mus musculus</name>
    <name type="common">Mouse</name>
    <dbReference type="NCBI Taxonomy" id="10090"/>
    <lineage>
        <taxon>Eukaryota</taxon>
        <taxon>Metazoa</taxon>
        <taxon>Chordata</taxon>
        <taxon>Craniata</taxon>
        <taxon>Vertebrata</taxon>
        <taxon>Euteleostomi</taxon>
        <taxon>Mammalia</taxon>
        <taxon>Eutheria</taxon>
        <taxon>Euarchontoglires</taxon>
        <taxon>Glires</taxon>
        <taxon>Rodentia</taxon>
        <taxon>Myomorpha</taxon>
        <taxon>Muroidea</taxon>
        <taxon>Muridae</taxon>
        <taxon>Murinae</taxon>
        <taxon>Mus</taxon>
        <taxon>Mus</taxon>
    </lineage>
</organism>
<proteinExistence type="evidence at transcript level"/>
<sequence length="209" mass="22444">MASPAPLVASISHQMVALQTLQLLQQEWGWGDGPSAPGSPRGPDHVPIAQARRPGQLRTRRGLGRGSIGARGSPEAGGLRGAEGGAELLPFPRDRGPCTLARMAMRSALARVVDSTSELVSVEQTLLGPLQQERPFPVHLKDSVEFRNICSHLALQIEGQQFDRDLNAAHQCLKTIVKKLIQSLANLPSDAHVVACASLRQILQNLPDV</sequence>
<reference key="1">
    <citation type="journal article" date="2004" name="Genome Res.">
        <title>The status, quality, and expansion of the NIH full-length cDNA project: the Mammalian Gene Collection (MGC).</title>
        <authorList>
            <consortium name="The MGC Project Team"/>
        </authorList>
    </citation>
    <scope>NUCLEOTIDE SEQUENCE [LARGE SCALE MRNA]</scope>
    <source>
        <strain>FVB/N</strain>
        <tissue>Kidney</tissue>
    </source>
</reference>
<accession>Q8CHZ8</accession>
<keyword id="KW-1185">Reference proteome</keyword>
<gene>
    <name type="primary">Dleu7</name>
    <name type="synonym">Leu7</name>
</gene>
<name>LEU7_MOUSE</name>
<feature type="chain" id="PRO_0000281768" description="Leukemia-associated protein 7 homolog">
    <location>
        <begin position="1"/>
        <end position="209"/>
    </location>
</feature>
<feature type="region of interest" description="Disordered" evidence="1">
    <location>
        <begin position="28"/>
        <end position="87"/>
    </location>
</feature>
<dbReference type="EMBL" id="BC038059">
    <property type="protein sequence ID" value="AAH38059.1"/>
    <property type="molecule type" value="mRNA"/>
</dbReference>
<dbReference type="CCDS" id="CCDS27188.1"/>
<dbReference type="RefSeq" id="NP_775595.1">
    <property type="nucleotide sequence ID" value="NM_173419.2"/>
</dbReference>
<dbReference type="SMR" id="Q8CHZ8"/>
<dbReference type="BioGRID" id="232052">
    <property type="interactions" value="1"/>
</dbReference>
<dbReference type="STRING" id="10090.ENSMUSP00000060855"/>
<dbReference type="PhosphoSitePlus" id="Q8CHZ8"/>
<dbReference type="PaxDb" id="10090-ENSMUSP00000060855"/>
<dbReference type="ProteomicsDB" id="286187"/>
<dbReference type="Antibodypedia" id="65682">
    <property type="antibodies" value="25 antibodies from 13 providers"/>
</dbReference>
<dbReference type="Ensembl" id="ENSMUST00000063169.10">
    <property type="protein sequence ID" value="ENSMUSP00000060855.8"/>
    <property type="gene ID" value="ENSMUSG00000048281.10"/>
</dbReference>
<dbReference type="GeneID" id="239133"/>
<dbReference type="KEGG" id="mmu:239133"/>
<dbReference type="UCSC" id="uc007ugk.2">
    <property type="organism name" value="mouse"/>
</dbReference>
<dbReference type="AGR" id="MGI:2447771"/>
<dbReference type="CTD" id="220107"/>
<dbReference type="MGI" id="MGI:2447771">
    <property type="gene designation" value="Dleu7"/>
</dbReference>
<dbReference type="VEuPathDB" id="HostDB:ENSMUSG00000048281"/>
<dbReference type="eggNOG" id="ENOG502SA9N">
    <property type="taxonomic scope" value="Eukaryota"/>
</dbReference>
<dbReference type="GeneTree" id="ENSGT00390000011737"/>
<dbReference type="HOGENOM" id="CLU_112947_1_0_1"/>
<dbReference type="InParanoid" id="Q8CHZ8"/>
<dbReference type="OMA" id="SHMALQL"/>
<dbReference type="OrthoDB" id="8788044at2759"/>
<dbReference type="PhylomeDB" id="Q8CHZ8"/>
<dbReference type="TreeFam" id="TF335748"/>
<dbReference type="BioGRID-ORCS" id="239133">
    <property type="hits" value="2 hits in 77 CRISPR screens"/>
</dbReference>
<dbReference type="ChiTaRS" id="Dleu7">
    <property type="organism name" value="mouse"/>
</dbReference>
<dbReference type="PRO" id="PR:Q8CHZ8"/>
<dbReference type="Proteomes" id="UP000000589">
    <property type="component" value="Chromosome 14"/>
</dbReference>
<dbReference type="RNAct" id="Q8CHZ8">
    <property type="molecule type" value="protein"/>
</dbReference>
<dbReference type="Bgee" id="ENSMUSG00000048281">
    <property type="expression patterns" value="Expressed in medial ganglionic eminence and 129 other cell types or tissues"/>
</dbReference>
<dbReference type="ExpressionAtlas" id="Q8CHZ8">
    <property type="expression patterns" value="baseline and differential"/>
</dbReference>
<dbReference type="InterPro" id="IPR031510">
    <property type="entry name" value="DLEU7"/>
</dbReference>
<dbReference type="PANTHER" id="PTHR36961">
    <property type="entry name" value="LEUKEMIA-ASSOCIATED PROTEIN 7"/>
    <property type="match status" value="1"/>
</dbReference>
<dbReference type="PANTHER" id="PTHR36961:SF1">
    <property type="entry name" value="LEUKEMIA-ASSOCIATED PROTEIN 7"/>
    <property type="match status" value="1"/>
</dbReference>
<dbReference type="Pfam" id="PF15760">
    <property type="entry name" value="DLEU7"/>
    <property type="match status" value="1"/>
</dbReference>